<protein>
    <recommendedName>
        <fullName>Membrane-associated tyrosine- and threonine-specific cdc2-inhibitory kinase</fullName>
        <ecNumber evidence="5 6 9">2.7.11.1</ecNumber>
    </recommendedName>
    <alternativeName>
        <fullName>Myt1 kinase</fullName>
    </alternativeName>
</protein>
<proteinExistence type="evidence at protein level"/>
<keyword id="KW-0002">3D-structure</keyword>
<keyword id="KW-0007">Acetylation</keyword>
<keyword id="KW-0025">Alternative splicing</keyword>
<keyword id="KW-0067">ATP-binding</keyword>
<keyword id="KW-0131">Cell cycle</keyword>
<keyword id="KW-0256">Endoplasmic reticulum</keyword>
<keyword id="KW-0333">Golgi apparatus</keyword>
<keyword id="KW-0418">Kinase</keyword>
<keyword id="KW-0460">Magnesium</keyword>
<keyword id="KW-0472">Membrane</keyword>
<keyword id="KW-0479">Metal-binding</keyword>
<keyword id="KW-0547">Nucleotide-binding</keyword>
<keyword id="KW-0597">Phosphoprotein</keyword>
<keyword id="KW-1267">Proteomics identification</keyword>
<keyword id="KW-1185">Reference proteome</keyword>
<keyword id="KW-0723">Serine/threonine-protein kinase</keyword>
<keyword id="KW-0808">Transferase</keyword>
<sequence length="499" mass="54521">MLERPPALAMPMPTEGTPPPLSGTPIPVPAYFRHAEPGFSLKRPRGLSRSLPPPPPAKGSIPISRLFPPRTPGWHQLQPRRVSFRGEASETLQSPGYDPSRPESFFQQSFQRLSRLGHGSYGEVFKVRSKEDGRLYAVKRSMSPFRGPKDRARKLAEVGSHEKVGQHPCCVRLEQAWEEGGILYLQTELCGPSLQQHCEAWGASLPEAQVWGYLRDTLLALAHLHSQGLVHLDVKPANIFLGPRGRCKLGDFGLLVELGTAGAGEVQEGDPRYMAPELLQGSYGTAADVFSLGLTILEVACNMELPHGGEGWQQLRQGYLPPEFTAGLSSELRSVLVMMLEPDPKLRATAEALLALPVLRQPRAWGVLWCMAAEALSRGWALWQALLALLCWLWHGLAHPASWLQPLGPPATPPGSPPCSLLLDSSLSSNWDDDSLGPSLSPEAVLARTVGSTSTPRSRCTPRDALDLSDINSEPPRGSFPSFEPRNLLSLFEDTLDPT</sequence>
<dbReference type="EC" id="2.7.11.1" evidence="5 6 9"/>
<dbReference type="EMBL" id="AF014118">
    <property type="protein sequence ID" value="AAB71843.1"/>
    <property type="molecule type" value="mRNA"/>
</dbReference>
<dbReference type="EMBL" id="U56816">
    <property type="protein sequence ID" value="AAC50949.1"/>
    <property type="molecule type" value="mRNA"/>
</dbReference>
<dbReference type="EMBL" id="AK097642">
    <property type="protein sequence ID" value="BAG53500.1"/>
    <property type="molecule type" value="mRNA"/>
</dbReference>
<dbReference type="EMBL" id="AK098452">
    <property type="status" value="NOT_ANNOTATED_CDS"/>
    <property type="molecule type" value="mRNA"/>
</dbReference>
<dbReference type="EMBL" id="AK301926">
    <property type="protein sequence ID" value="BAG63346.1"/>
    <property type="molecule type" value="mRNA"/>
</dbReference>
<dbReference type="EMBL" id="AF549406">
    <property type="protein sequence ID" value="AAN40703.1"/>
    <property type="molecule type" value="Genomic_DNA"/>
</dbReference>
<dbReference type="EMBL" id="AC004233">
    <property type="protein sequence ID" value="AAC04478.1"/>
    <property type="molecule type" value="Genomic_DNA"/>
</dbReference>
<dbReference type="EMBL" id="AC004235">
    <property type="protein sequence ID" value="AAC04477.1"/>
    <property type="molecule type" value="Genomic_DNA"/>
</dbReference>
<dbReference type="EMBL" id="CH471112">
    <property type="protein sequence ID" value="EAW85439.1"/>
    <property type="molecule type" value="Genomic_DNA"/>
</dbReference>
<dbReference type="EMBL" id="CH471112">
    <property type="protein sequence ID" value="EAW85440.1"/>
    <property type="molecule type" value="Genomic_DNA"/>
</dbReference>
<dbReference type="EMBL" id="AL713779">
    <property type="protein sequence ID" value="CAD28540.1"/>
    <property type="status" value="ALT_SEQ"/>
    <property type="molecule type" value="mRNA"/>
</dbReference>
<dbReference type="CCDS" id="CCDS10486.1">
    <molecule id="Q99640-1"/>
</dbReference>
<dbReference type="CCDS" id="CCDS45391.1">
    <molecule id="Q99640-2"/>
</dbReference>
<dbReference type="CCDS" id="CCDS58414.1">
    <molecule id="Q99640-3"/>
</dbReference>
<dbReference type="CCDS" id="CCDS58415.1">
    <molecule id="Q99640-4"/>
</dbReference>
<dbReference type="RefSeq" id="NP_001245379.1">
    <molecule id="Q99640-4"/>
    <property type="nucleotide sequence ID" value="NM_001258450.2"/>
</dbReference>
<dbReference type="RefSeq" id="NP_001245380.1">
    <molecule id="Q99640-3"/>
    <property type="nucleotide sequence ID" value="NM_001258451.2"/>
</dbReference>
<dbReference type="RefSeq" id="NP_004194.3">
    <molecule id="Q99640-1"/>
    <property type="nucleotide sequence ID" value="NM_004203.4"/>
</dbReference>
<dbReference type="RefSeq" id="NP_872629.1">
    <molecule id="Q99640-2"/>
    <property type="nucleotide sequence ID" value="NM_182687.3"/>
</dbReference>
<dbReference type="RefSeq" id="XP_011521036.1">
    <molecule id="Q99640-1"/>
    <property type="nucleotide sequence ID" value="XM_011522734.4"/>
</dbReference>
<dbReference type="RefSeq" id="XP_011521037.1">
    <molecule id="Q99640-3"/>
    <property type="nucleotide sequence ID" value="XM_011522735.4"/>
</dbReference>
<dbReference type="RefSeq" id="XP_011521038.1">
    <property type="nucleotide sequence ID" value="XM_011522736.2"/>
</dbReference>
<dbReference type="RefSeq" id="XP_024306258.1">
    <molecule id="Q99640-1"/>
    <property type="nucleotide sequence ID" value="XM_024450490.2"/>
</dbReference>
<dbReference type="RefSeq" id="XP_047290829.1">
    <molecule id="Q99640-1"/>
    <property type="nucleotide sequence ID" value="XM_047434873.1"/>
</dbReference>
<dbReference type="RefSeq" id="XP_047290830.1">
    <molecule id="Q99640-1"/>
    <property type="nucleotide sequence ID" value="XM_047434874.1"/>
</dbReference>
<dbReference type="RefSeq" id="XP_054170300.1">
    <molecule id="Q99640-1"/>
    <property type="nucleotide sequence ID" value="XM_054314325.1"/>
</dbReference>
<dbReference type="RefSeq" id="XP_054170301.1">
    <molecule id="Q99640-1"/>
    <property type="nucleotide sequence ID" value="XM_054314326.1"/>
</dbReference>
<dbReference type="RefSeq" id="XP_054170302.1">
    <molecule id="Q99640-1"/>
    <property type="nucleotide sequence ID" value="XM_054314327.1"/>
</dbReference>
<dbReference type="RefSeq" id="XP_054170303.1">
    <molecule id="Q99640-1"/>
    <property type="nucleotide sequence ID" value="XM_054314328.1"/>
</dbReference>
<dbReference type="RefSeq" id="XP_054170304.1">
    <molecule id="Q99640-3"/>
    <property type="nucleotide sequence ID" value="XM_054314329.1"/>
</dbReference>
<dbReference type="PDB" id="3P1A">
    <property type="method" value="X-ray"/>
    <property type="resolution" value="1.70 A"/>
    <property type="chains" value="A=75-362"/>
</dbReference>
<dbReference type="PDB" id="5VCV">
    <property type="method" value="X-ray"/>
    <property type="resolution" value="1.92 A"/>
    <property type="chains" value="A=75-362"/>
</dbReference>
<dbReference type="PDB" id="5VCW">
    <property type="method" value="X-ray"/>
    <property type="resolution" value="2.25 A"/>
    <property type="chains" value="A/B=75-362"/>
</dbReference>
<dbReference type="PDB" id="5VCX">
    <property type="method" value="X-ray"/>
    <property type="resolution" value="2.70 A"/>
    <property type="chains" value="A=75-362"/>
</dbReference>
<dbReference type="PDB" id="5VCY">
    <property type="method" value="X-ray"/>
    <property type="resolution" value="1.56 A"/>
    <property type="chains" value="A=75-362"/>
</dbReference>
<dbReference type="PDB" id="5VCZ">
    <property type="method" value="X-ray"/>
    <property type="resolution" value="1.50 A"/>
    <property type="chains" value="A=75-362"/>
</dbReference>
<dbReference type="PDB" id="5VD0">
    <property type="method" value="X-ray"/>
    <property type="resolution" value="2.13 A"/>
    <property type="chains" value="A=75-362"/>
</dbReference>
<dbReference type="PDB" id="5VD1">
    <property type="method" value="X-ray"/>
    <property type="resolution" value="1.70 A"/>
    <property type="chains" value="A=75-362"/>
</dbReference>
<dbReference type="PDB" id="5VD3">
    <property type="method" value="X-ray"/>
    <property type="resolution" value="1.80 A"/>
    <property type="chains" value="A=75-362"/>
</dbReference>
<dbReference type="PDB" id="8D6C">
    <property type="method" value="X-ray"/>
    <property type="resolution" value="2.20 A"/>
    <property type="chains" value="A/B=75-362"/>
</dbReference>
<dbReference type="PDB" id="8D6D">
    <property type="method" value="X-ray"/>
    <property type="resolution" value="2.35 A"/>
    <property type="chains" value="A/B=75-362"/>
</dbReference>
<dbReference type="PDB" id="8D6E">
    <property type="method" value="X-ray"/>
    <property type="resolution" value="2.15 A"/>
    <property type="chains" value="A/B=75-362"/>
</dbReference>
<dbReference type="PDB" id="8D6F">
    <property type="method" value="X-ray"/>
    <property type="resolution" value="2.49 A"/>
    <property type="chains" value="A/B=75-362"/>
</dbReference>
<dbReference type="PDB" id="8WJY">
    <property type="method" value="X-ray"/>
    <property type="resolution" value="1.88 A"/>
    <property type="chains" value="A=75-362"/>
</dbReference>
<dbReference type="PDB" id="8ZTX">
    <property type="method" value="X-ray"/>
    <property type="resolution" value="1.70 A"/>
    <property type="chains" value="A=75-362"/>
</dbReference>
<dbReference type="PDB" id="8ZU2">
    <property type="method" value="X-ray"/>
    <property type="resolution" value="1.80 A"/>
    <property type="chains" value="A=75-361"/>
</dbReference>
<dbReference type="PDB" id="8ZUD">
    <property type="method" value="X-ray"/>
    <property type="resolution" value="1.51 A"/>
    <property type="chains" value="A=75-361"/>
</dbReference>
<dbReference type="PDB" id="8ZUL">
    <property type="method" value="X-ray"/>
    <property type="resolution" value="1.80 A"/>
    <property type="chains" value="A=75-361"/>
</dbReference>
<dbReference type="PDBsum" id="3P1A"/>
<dbReference type="PDBsum" id="5VCV"/>
<dbReference type="PDBsum" id="5VCW"/>
<dbReference type="PDBsum" id="5VCX"/>
<dbReference type="PDBsum" id="5VCY"/>
<dbReference type="PDBsum" id="5VCZ"/>
<dbReference type="PDBsum" id="5VD0"/>
<dbReference type="PDBsum" id="5VD1"/>
<dbReference type="PDBsum" id="5VD3"/>
<dbReference type="PDBsum" id="8D6C"/>
<dbReference type="PDBsum" id="8D6D"/>
<dbReference type="PDBsum" id="8D6E"/>
<dbReference type="PDBsum" id="8D6F"/>
<dbReference type="PDBsum" id="8WJY"/>
<dbReference type="PDBsum" id="8ZTX"/>
<dbReference type="PDBsum" id="8ZU2"/>
<dbReference type="PDBsum" id="8ZUD"/>
<dbReference type="PDBsum" id="8ZUL"/>
<dbReference type="SMR" id="Q99640"/>
<dbReference type="BioGRID" id="114544">
    <property type="interactions" value="166"/>
</dbReference>
<dbReference type="ELM" id="Q99640"/>
<dbReference type="FunCoup" id="Q99640">
    <property type="interactions" value="2149"/>
</dbReference>
<dbReference type="IntAct" id="Q99640">
    <property type="interactions" value="87"/>
</dbReference>
<dbReference type="MINT" id="Q99640"/>
<dbReference type="STRING" id="9606.ENSP00000262300"/>
<dbReference type="BindingDB" id="Q99640"/>
<dbReference type="ChEMBL" id="CHEMBL3984"/>
<dbReference type="DrugBank" id="DB12010">
    <property type="generic name" value="Fostamatinib"/>
</dbReference>
<dbReference type="DrugCentral" id="Q99640"/>
<dbReference type="GuidetoPHARMACOLOGY" id="2167"/>
<dbReference type="GlyGen" id="Q99640">
    <property type="glycosylation" value="3 sites, 1 O-linked glycan (1 site)"/>
</dbReference>
<dbReference type="iPTMnet" id="Q99640"/>
<dbReference type="PhosphoSitePlus" id="Q99640"/>
<dbReference type="SwissPalm" id="Q99640"/>
<dbReference type="BioMuta" id="PKMYT1"/>
<dbReference type="DMDM" id="55976573"/>
<dbReference type="CPTAC" id="non-CPTAC-5677"/>
<dbReference type="jPOST" id="Q99640"/>
<dbReference type="MassIVE" id="Q99640"/>
<dbReference type="PaxDb" id="9606-ENSP00000262300"/>
<dbReference type="PeptideAtlas" id="Q99640"/>
<dbReference type="ProteomicsDB" id="29565"/>
<dbReference type="ProteomicsDB" id="46754"/>
<dbReference type="ProteomicsDB" id="5428"/>
<dbReference type="ProteomicsDB" id="78372">
    <molecule id="Q99640-1"/>
</dbReference>
<dbReference type="Pumba" id="Q99640"/>
<dbReference type="Antibodypedia" id="23946">
    <property type="antibodies" value="516 antibodies from 34 providers"/>
</dbReference>
<dbReference type="DNASU" id="9088"/>
<dbReference type="Ensembl" id="ENST00000262300.13">
    <molecule id="Q99640-1"/>
    <property type="protein sequence ID" value="ENSP00000262300.8"/>
    <property type="gene ID" value="ENSG00000127564.17"/>
</dbReference>
<dbReference type="Ensembl" id="ENST00000440027.6">
    <molecule id="Q99640-2"/>
    <property type="protein sequence ID" value="ENSP00000397739.2"/>
    <property type="gene ID" value="ENSG00000127564.17"/>
</dbReference>
<dbReference type="Ensembl" id="ENST00000573944.5">
    <molecule id="Q99640-3"/>
    <property type="protein sequence ID" value="ENSP00000459123.1"/>
    <property type="gene ID" value="ENSG00000127564.17"/>
</dbReference>
<dbReference type="Ensembl" id="ENST00000574385.5">
    <molecule id="Q99640-3"/>
    <property type="protein sequence ID" value="ENSP00000458943.1"/>
    <property type="gene ID" value="ENSG00000127564.17"/>
</dbReference>
<dbReference type="Ensembl" id="ENST00000574730.5">
    <molecule id="Q99640-4"/>
    <property type="protein sequence ID" value="ENSP00000460868.1"/>
    <property type="gene ID" value="ENSG00000127564.17"/>
</dbReference>
<dbReference type="GeneID" id="9088"/>
<dbReference type="KEGG" id="hsa:9088"/>
<dbReference type="MANE-Select" id="ENST00000262300.13">
    <property type="protein sequence ID" value="ENSP00000262300.8"/>
    <property type="RefSeq nucleotide sequence ID" value="NM_004203.5"/>
    <property type="RefSeq protein sequence ID" value="NP_004194.3"/>
</dbReference>
<dbReference type="UCSC" id="uc002csm.4">
    <molecule id="Q99640-1"/>
    <property type="organism name" value="human"/>
</dbReference>
<dbReference type="AGR" id="HGNC:29650"/>
<dbReference type="CTD" id="9088"/>
<dbReference type="DisGeNET" id="9088"/>
<dbReference type="GeneCards" id="PKMYT1"/>
<dbReference type="HGNC" id="HGNC:29650">
    <property type="gene designation" value="PKMYT1"/>
</dbReference>
<dbReference type="HPA" id="ENSG00000127564">
    <property type="expression patterns" value="Tissue enhanced (bone marrow, testis)"/>
</dbReference>
<dbReference type="MIM" id="602474">
    <property type="type" value="gene"/>
</dbReference>
<dbReference type="neXtProt" id="NX_Q99640"/>
<dbReference type="OpenTargets" id="ENSG00000127564"/>
<dbReference type="PharmGKB" id="PA385"/>
<dbReference type="VEuPathDB" id="HostDB:ENSG00000127564"/>
<dbReference type="eggNOG" id="KOG0601">
    <property type="taxonomic scope" value="Eukaryota"/>
</dbReference>
<dbReference type="GeneTree" id="ENSGT00940000159427"/>
<dbReference type="InParanoid" id="Q99640"/>
<dbReference type="OMA" id="PCTPPKD"/>
<dbReference type="OrthoDB" id="5337378at2759"/>
<dbReference type="PAN-GO" id="Q99640">
    <property type="GO annotations" value="3 GO annotations based on evolutionary models"/>
</dbReference>
<dbReference type="PhylomeDB" id="Q99640"/>
<dbReference type="TreeFam" id="TF101087"/>
<dbReference type="PathwayCommons" id="Q99640"/>
<dbReference type="Reactome" id="R-HSA-156711">
    <property type="pathway name" value="Polo-like kinase mediated events"/>
</dbReference>
<dbReference type="Reactome" id="R-HSA-69273">
    <property type="pathway name" value="Cyclin A/B1/B2 associated events during G2/M transition"/>
</dbReference>
<dbReference type="Reactome" id="R-HSA-69478">
    <property type="pathway name" value="G2/M DNA replication checkpoint"/>
</dbReference>
<dbReference type="SignaLink" id="Q99640"/>
<dbReference type="SIGNOR" id="Q99640"/>
<dbReference type="BioGRID-ORCS" id="9088">
    <property type="hits" value="815 hits in 1194 CRISPR screens"/>
</dbReference>
<dbReference type="ChiTaRS" id="PKMYT1">
    <property type="organism name" value="human"/>
</dbReference>
<dbReference type="EvolutionaryTrace" id="Q99640"/>
<dbReference type="GeneWiki" id="PKMYT1"/>
<dbReference type="GenomeRNAi" id="9088"/>
<dbReference type="Pharos" id="Q99640">
    <property type="development level" value="Tchem"/>
</dbReference>
<dbReference type="PRO" id="PR:Q99640"/>
<dbReference type="Proteomes" id="UP000005640">
    <property type="component" value="Chromosome 16"/>
</dbReference>
<dbReference type="RNAct" id="Q99640">
    <property type="molecule type" value="protein"/>
</dbReference>
<dbReference type="Bgee" id="ENSG00000127564">
    <property type="expression patterns" value="Expressed in right testis and 114 other cell types or tissues"/>
</dbReference>
<dbReference type="ExpressionAtlas" id="Q99640">
    <property type="expression patterns" value="baseline and differential"/>
</dbReference>
<dbReference type="GO" id="GO:0005737">
    <property type="term" value="C:cytoplasm"/>
    <property type="evidence" value="ECO:0000318"/>
    <property type="project" value="GO_Central"/>
</dbReference>
<dbReference type="GO" id="GO:0005829">
    <property type="term" value="C:cytosol"/>
    <property type="evidence" value="ECO:0000304"/>
    <property type="project" value="Reactome"/>
</dbReference>
<dbReference type="GO" id="GO:0005783">
    <property type="term" value="C:endoplasmic reticulum"/>
    <property type="evidence" value="ECO:0000304"/>
    <property type="project" value="ProtInc"/>
</dbReference>
<dbReference type="GO" id="GO:0005789">
    <property type="term" value="C:endoplasmic reticulum membrane"/>
    <property type="evidence" value="ECO:0007669"/>
    <property type="project" value="UniProtKB-SubCell"/>
</dbReference>
<dbReference type="GO" id="GO:0005794">
    <property type="term" value="C:Golgi apparatus"/>
    <property type="evidence" value="ECO:0000314"/>
    <property type="project" value="HPA"/>
</dbReference>
<dbReference type="GO" id="GO:0000139">
    <property type="term" value="C:Golgi membrane"/>
    <property type="evidence" value="ECO:0007669"/>
    <property type="project" value="UniProtKB-SubCell"/>
</dbReference>
<dbReference type="GO" id="GO:0016020">
    <property type="term" value="C:membrane"/>
    <property type="evidence" value="ECO:0007005"/>
    <property type="project" value="UniProtKB"/>
</dbReference>
<dbReference type="GO" id="GO:0005730">
    <property type="term" value="C:nucleolus"/>
    <property type="evidence" value="ECO:0000314"/>
    <property type="project" value="HPA"/>
</dbReference>
<dbReference type="GO" id="GO:0005654">
    <property type="term" value="C:nucleoplasm"/>
    <property type="evidence" value="ECO:0000314"/>
    <property type="project" value="HPA"/>
</dbReference>
<dbReference type="GO" id="GO:0005634">
    <property type="term" value="C:nucleus"/>
    <property type="evidence" value="ECO:0000318"/>
    <property type="project" value="GO_Central"/>
</dbReference>
<dbReference type="GO" id="GO:0005524">
    <property type="term" value="F:ATP binding"/>
    <property type="evidence" value="ECO:0007669"/>
    <property type="project" value="UniProtKB-KW"/>
</dbReference>
<dbReference type="GO" id="GO:0016301">
    <property type="term" value="F:kinase activity"/>
    <property type="evidence" value="ECO:0000314"/>
    <property type="project" value="HGNC-UCL"/>
</dbReference>
<dbReference type="GO" id="GO:0046872">
    <property type="term" value="F:metal ion binding"/>
    <property type="evidence" value="ECO:0007669"/>
    <property type="project" value="UniProtKB-KW"/>
</dbReference>
<dbReference type="GO" id="GO:0004672">
    <property type="term" value="F:protein kinase activity"/>
    <property type="evidence" value="ECO:0000318"/>
    <property type="project" value="GO_Central"/>
</dbReference>
<dbReference type="GO" id="GO:0106310">
    <property type="term" value="F:protein serine kinase activity"/>
    <property type="evidence" value="ECO:0007669"/>
    <property type="project" value="RHEA"/>
</dbReference>
<dbReference type="GO" id="GO:0004674">
    <property type="term" value="F:protein serine/threonine kinase activity"/>
    <property type="evidence" value="ECO:0000314"/>
    <property type="project" value="UniProtKB"/>
</dbReference>
<dbReference type="GO" id="GO:0000086">
    <property type="term" value="P:G2/M transition of mitotic cell cycle"/>
    <property type="evidence" value="ECO:0000304"/>
    <property type="project" value="Reactome"/>
</dbReference>
<dbReference type="GO" id="GO:0051321">
    <property type="term" value="P:meiotic cell cycle"/>
    <property type="evidence" value="ECO:0000318"/>
    <property type="project" value="GO_Central"/>
</dbReference>
<dbReference type="GO" id="GO:0000278">
    <property type="term" value="P:mitotic cell cycle"/>
    <property type="evidence" value="ECO:0000304"/>
    <property type="project" value="ProtInc"/>
</dbReference>
<dbReference type="GO" id="GO:0010972">
    <property type="term" value="P:negative regulation of G2/M transition of mitotic cell cycle"/>
    <property type="evidence" value="ECO:0000314"/>
    <property type="project" value="UniProtKB"/>
</dbReference>
<dbReference type="GO" id="GO:0110031">
    <property type="term" value="P:negative regulation of G2/MI transition of meiotic cell cycle"/>
    <property type="evidence" value="ECO:0000318"/>
    <property type="project" value="GO_Central"/>
</dbReference>
<dbReference type="GO" id="GO:0000079">
    <property type="term" value="P:regulation of cyclin-dependent protein serine/threonine kinase activity"/>
    <property type="evidence" value="ECO:0000304"/>
    <property type="project" value="ProtInc"/>
</dbReference>
<dbReference type="GO" id="GO:0007088">
    <property type="term" value="P:regulation of mitotic nuclear division"/>
    <property type="evidence" value="ECO:0000304"/>
    <property type="project" value="ProtInc"/>
</dbReference>
<dbReference type="CDD" id="cd14050">
    <property type="entry name" value="PKc_Myt1"/>
    <property type="match status" value="1"/>
</dbReference>
<dbReference type="FunFam" id="1.10.510.10:FF:000315">
    <property type="entry name" value="membrane-associated tyrosine- and threonine-specific cdc2-inhibitory kinase"/>
    <property type="match status" value="1"/>
</dbReference>
<dbReference type="FunFam" id="3.30.200.20:FF:000280">
    <property type="entry name" value="membrane-associated tyrosine- and threonine-specific cdc2-inhibitory kinase"/>
    <property type="match status" value="1"/>
</dbReference>
<dbReference type="Gene3D" id="3.30.200.20">
    <property type="entry name" value="Phosphorylase Kinase, domain 1"/>
    <property type="match status" value="1"/>
</dbReference>
<dbReference type="Gene3D" id="1.10.510.10">
    <property type="entry name" value="Transferase(Phosphotransferase) domain 1"/>
    <property type="match status" value="1"/>
</dbReference>
<dbReference type="InterPro" id="IPR050339">
    <property type="entry name" value="CC_SR_Kinase"/>
</dbReference>
<dbReference type="InterPro" id="IPR011009">
    <property type="entry name" value="Kinase-like_dom_sf"/>
</dbReference>
<dbReference type="InterPro" id="IPR000719">
    <property type="entry name" value="Prot_kinase_dom"/>
</dbReference>
<dbReference type="InterPro" id="IPR017441">
    <property type="entry name" value="Protein_kinase_ATP_BS"/>
</dbReference>
<dbReference type="InterPro" id="IPR008271">
    <property type="entry name" value="Ser/Thr_kinase_AS"/>
</dbReference>
<dbReference type="InterPro" id="IPR016235">
    <property type="entry name" value="Tyr/Thr_kinase_Cdc2_inhib"/>
</dbReference>
<dbReference type="PANTHER" id="PTHR11042">
    <property type="entry name" value="EUKARYOTIC TRANSLATION INITIATION FACTOR 2-ALPHA KINASE EIF2-ALPHA KINASE -RELATED"/>
    <property type="match status" value="1"/>
</dbReference>
<dbReference type="PANTHER" id="PTHR11042:SF183">
    <property type="entry name" value="MEMBRANE-ASSOCIATED TYROSINE- AND THREONINE-SPECIFIC CDC2-INHIBITORY KINASE"/>
    <property type="match status" value="1"/>
</dbReference>
<dbReference type="Pfam" id="PF00069">
    <property type="entry name" value="Pkinase"/>
    <property type="match status" value="1"/>
</dbReference>
<dbReference type="PIRSF" id="PIRSF000567">
    <property type="entry name" value="TYPK_Myt1"/>
    <property type="match status" value="1"/>
</dbReference>
<dbReference type="SMART" id="SM00220">
    <property type="entry name" value="S_TKc"/>
    <property type="match status" value="1"/>
</dbReference>
<dbReference type="SUPFAM" id="SSF56112">
    <property type="entry name" value="Protein kinase-like (PK-like)"/>
    <property type="match status" value="1"/>
</dbReference>
<dbReference type="PROSITE" id="PS00107">
    <property type="entry name" value="PROTEIN_KINASE_ATP"/>
    <property type="match status" value="1"/>
</dbReference>
<dbReference type="PROSITE" id="PS50011">
    <property type="entry name" value="PROTEIN_KINASE_DOM"/>
    <property type="match status" value="1"/>
</dbReference>
<dbReference type="PROSITE" id="PS00108">
    <property type="entry name" value="PROTEIN_KINASE_ST"/>
    <property type="match status" value="1"/>
</dbReference>
<reference key="1">
    <citation type="journal article" date="1997" name="J. Biol. Chem.">
        <title>Human Myt1 is a cell cycle-regulated kinase that inhibits Cdc2 but not Cdk2 activity.</title>
        <authorList>
            <person name="Booher R.N."/>
            <person name="Holman P.S."/>
            <person name="Fattaey A."/>
        </authorList>
    </citation>
    <scope>NUCLEOTIDE SEQUENCE [MRNA] (ISOFORM 1)</scope>
    <scope>FUNCTION</scope>
    <scope>ACTIVITY REGULATION</scope>
</reference>
<reference key="2">
    <citation type="journal article" date="1997" name="Mol. Cell. Biol.">
        <title>The human Myt1 kinase preferentially phosphorylates Cdc2 on threonine 14 and localizes to the endoplasmic reticulum and Golgi complex.</title>
        <authorList>
            <person name="Liu F."/>
            <person name="Stanton J.J."/>
            <person name="Wu Z."/>
            <person name="Piwnica-Worms H."/>
        </authorList>
    </citation>
    <scope>NUCLEOTIDE SEQUENCE [MRNA] (ISOFORM 1)</scope>
    <scope>FUNCTION</scope>
    <scope>CATALYTIC ACTIVITY</scope>
    <scope>SUBCELLULAR LOCATION</scope>
</reference>
<reference key="3">
    <citation type="journal article" date="2004" name="Nat. Genet.">
        <title>Complete sequencing and characterization of 21,243 full-length human cDNAs.</title>
        <authorList>
            <person name="Ota T."/>
            <person name="Suzuki Y."/>
            <person name="Nishikawa T."/>
            <person name="Otsuki T."/>
            <person name="Sugiyama T."/>
            <person name="Irie R."/>
            <person name="Wakamatsu A."/>
            <person name="Hayashi K."/>
            <person name="Sato H."/>
            <person name="Nagai K."/>
            <person name="Kimura K."/>
            <person name="Makita H."/>
            <person name="Sekine M."/>
            <person name="Obayashi M."/>
            <person name="Nishi T."/>
            <person name="Shibahara T."/>
            <person name="Tanaka T."/>
            <person name="Ishii S."/>
            <person name="Yamamoto J."/>
            <person name="Saito K."/>
            <person name="Kawai Y."/>
            <person name="Isono Y."/>
            <person name="Nakamura Y."/>
            <person name="Nagahari K."/>
            <person name="Murakami K."/>
            <person name="Yasuda T."/>
            <person name="Iwayanagi T."/>
            <person name="Wagatsuma M."/>
            <person name="Shiratori A."/>
            <person name="Sudo H."/>
            <person name="Hosoiri T."/>
            <person name="Kaku Y."/>
            <person name="Kodaira H."/>
            <person name="Kondo H."/>
            <person name="Sugawara M."/>
            <person name="Takahashi M."/>
            <person name="Kanda K."/>
            <person name="Yokoi T."/>
            <person name="Furuya T."/>
            <person name="Kikkawa E."/>
            <person name="Omura Y."/>
            <person name="Abe K."/>
            <person name="Kamihara K."/>
            <person name="Katsuta N."/>
            <person name="Sato K."/>
            <person name="Tanikawa M."/>
            <person name="Yamazaki M."/>
            <person name="Ninomiya K."/>
            <person name="Ishibashi T."/>
            <person name="Yamashita H."/>
            <person name="Murakawa K."/>
            <person name="Fujimori K."/>
            <person name="Tanai H."/>
            <person name="Kimata M."/>
            <person name="Watanabe M."/>
            <person name="Hiraoka S."/>
            <person name="Chiba Y."/>
            <person name="Ishida S."/>
            <person name="Ono Y."/>
            <person name="Takiguchi S."/>
            <person name="Watanabe S."/>
            <person name="Yosida M."/>
            <person name="Hotuta T."/>
            <person name="Kusano J."/>
            <person name="Kanehori K."/>
            <person name="Takahashi-Fujii A."/>
            <person name="Hara H."/>
            <person name="Tanase T.-O."/>
            <person name="Nomura Y."/>
            <person name="Togiya S."/>
            <person name="Komai F."/>
            <person name="Hara R."/>
            <person name="Takeuchi K."/>
            <person name="Arita M."/>
            <person name="Imose N."/>
            <person name="Musashino K."/>
            <person name="Yuuki H."/>
            <person name="Oshima A."/>
            <person name="Sasaki N."/>
            <person name="Aotsuka S."/>
            <person name="Yoshikawa Y."/>
            <person name="Matsunawa H."/>
            <person name="Ichihara T."/>
            <person name="Shiohata N."/>
            <person name="Sano S."/>
            <person name="Moriya S."/>
            <person name="Momiyama H."/>
            <person name="Satoh N."/>
            <person name="Takami S."/>
            <person name="Terashima Y."/>
            <person name="Suzuki O."/>
            <person name="Nakagawa S."/>
            <person name="Senoh A."/>
            <person name="Mizoguchi H."/>
            <person name="Goto Y."/>
            <person name="Shimizu F."/>
            <person name="Wakebe H."/>
            <person name="Hishigaki H."/>
            <person name="Watanabe T."/>
            <person name="Sugiyama A."/>
            <person name="Takemoto M."/>
            <person name="Kawakami B."/>
            <person name="Yamazaki M."/>
            <person name="Watanabe K."/>
            <person name="Kumagai A."/>
            <person name="Itakura S."/>
            <person name="Fukuzumi Y."/>
            <person name="Fujimori Y."/>
            <person name="Komiyama M."/>
            <person name="Tashiro H."/>
            <person name="Tanigami A."/>
            <person name="Fujiwara T."/>
            <person name="Ono T."/>
            <person name="Yamada K."/>
            <person name="Fujii Y."/>
            <person name="Ozaki K."/>
            <person name="Hirao M."/>
            <person name="Ohmori Y."/>
            <person name="Kawabata A."/>
            <person name="Hikiji T."/>
            <person name="Kobatake N."/>
            <person name="Inagaki H."/>
            <person name="Ikema Y."/>
            <person name="Okamoto S."/>
            <person name="Okitani R."/>
            <person name="Kawakami T."/>
            <person name="Noguchi S."/>
            <person name="Itoh T."/>
            <person name="Shigeta K."/>
            <person name="Senba T."/>
            <person name="Matsumura K."/>
            <person name="Nakajima Y."/>
            <person name="Mizuno T."/>
            <person name="Morinaga M."/>
            <person name="Sasaki M."/>
            <person name="Togashi T."/>
            <person name="Oyama M."/>
            <person name="Hata H."/>
            <person name="Watanabe M."/>
            <person name="Komatsu T."/>
            <person name="Mizushima-Sugano J."/>
            <person name="Satoh T."/>
            <person name="Shirai Y."/>
            <person name="Takahashi Y."/>
            <person name="Nakagawa K."/>
            <person name="Okumura K."/>
            <person name="Nagase T."/>
            <person name="Nomura N."/>
            <person name="Kikuchi H."/>
            <person name="Masuho Y."/>
            <person name="Yamashita R."/>
            <person name="Nakai K."/>
            <person name="Yada T."/>
            <person name="Nakamura Y."/>
            <person name="Ohara O."/>
            <person name="Isogai T."/>
            <person name="Sugano S."/>
        </authorList>
    </citation>
    <scope>NUCLEOTIDE SEQUENCE [LARGE SCALE MRNA] (ISOFORMS 2; 3 AND 4)</scope>
    <source>
        <tissue>Testis</tissue>
        <tissue>Thyroid</tissue>
    </source>
</reference>
<reference key="4">
    <citation type="submission" date="2002-10" db="EMBL/GenBank/DDBJ databases">
        <authorList>
            <consortium name="NIEHS SNPs program"/>
        </authorList>
    </citation>
    <scope>NUCLEOTIDE SEQUENCE [GENOMIC DNA]</scope>
    <scope>VARIANTS CYS-140; ARG-417 AND ALA-445</scope>
</reference>
<reference key="5">
    <citation type="journal article" date="2004" name="Nature">
        <title>The sequence and analysis of duplication-rich human chromosome 16.</title>
        <authorList>
            <person name="Martin J."/>
            <person name="Han C."/>
            <person name="Gordon L.A."/>
            <person name="Terry A."/>
            <person name="Prabhakar S."/>
            <person name="She X."/>
            <person name="Xie G."/>
            <person name="Hellsten U."/>
            <person name="Chan Y.M."/>
            <person name="Altherr M."/>
            <person name="Couronne O."/>
            <person name="Aerts A."/>
            <person name="Bajorek E."/>
            <person name="Black S."/>
            <person name="Blumer H."/>
            <person name="Branscomb E."/>
            <person name="Brown N.C."/>
            <person name="Bruno W.J."/>
            <person name="Buckingham J.M."/>
            <person name="Callen D.F."/>
            <person name="Campbell C.S."/>
            <person name="Campbell M.L."/>
            <person name="Campbell E.W."/>
            <person name="Caoile C."/>
            <person name="Challacombe J.F."/>
            <person name="Chasteen L.A."/>
            <person name="Chertkov O."/>
            <person name="Chi H.C."/>
            <person name="Christensen M."/>
            <person name="Clark L.M."/>
            <person name="Cohn J.D."/>
            <person name="Denys M."/>
            <person name="Detter J.C."/>
            <person name="Dickson M."/>
            <person name="Dimitrijevic-Bussod M."/>
            <person name="Escobar J."/>
            <person name="Fawcett J.J."/>
            <person name="Flowers D."/>
            <person name="Fotopulos D."/>
            <person name="Glavina T."/>
            <person name="Gomez M."/>
            <person name="Gonzales E."/>
            <person name="Goodstein D."/>
            <person name="Goodwin L.A."/>
            <person name="Grady D.L."/>
            <person name="Grigoriev I."/>
            <person name="Groza M."/>
            <person name="Hammon N."/>
            <person name="Hawkins T."/>
            <person name="Haydu L."/>
            <person name="Hildebrand C.E."/>
            <person name="Huang W."/>
            <person name="Israni S."/>
            <person name="Jett J."/>
            <person name="Jewett P.B."/>
            <person name="Kadner K."/>
            <person name="Kimball H."/>
            <person name="Kobayashi A."/>
            <person name="Krawczyk M.-C."/>
            <person name="Leyba T."/>
            <person name="Longmire J.L."/>
            <person name="Lopez F."/>
            <person name="Lou Y."/>
            <person name="Lowry S."/>
            <person name="Ludeman T."/>
            <person name="Manohar C.F."/>
            <person name="Mark G.A."/>
            <person name="McMurray K.L."/>
            <person name="Meincke L.J."/>
            <person name="Morgan J."/>
            <person name="Moyzis R.K."/>
            <person name="Mundt M.O."/>
            <person name="Munk A.C."/>
            <person name="Nandkeshwar R.D."/>
            <person name="Pitluck S."/>
            <person name="Pollard M."/>
            <person name="Predki P."/>
            <person name="Parson-Quintana B."/>
            <person name="Ramirez L."/>
            <person name="Rash S."/>
            <person name="Retterer J."/>
            <person name="Ricke D.O."/>
            <person name="Robinson D.L."/>
            <person name="Rodriguez A."/>
            <person name="Salamov A."/>
            <person name="Saunders E.H."/>
            <person name="Scott D."/>
            <person name="Shough T."/>
            <person name="Stallings R.L."/>
            <person name="Stalvey M."/>
            <person name="Sutherland R.D."/>
            <person name="Tapia R."/>
            <person name="Tesmer J.G."/>
            <person name="Thayer N."/>
            <person name="Thompson L.S."/>
            <person name="Tice H."/>
            <person name="Torney D.C."/>
            <person name="Tran-Gyamfi M."/>
            <person name="Tsai M."/>
            <person name="Ulanovsky L.E."/>
            <person name="Ustaszewska A."/>
            <person name="Vo N."/>
            <person name="White P.S."/>
            <person name="Williams A.L."/>
            <person name="Wills P.L."/>
            <person name="Wu J.-R."/>
            <person name="Wu K."/>
            <person name="Yang J."/>
            <person name="DeJong P."/>
            <person name="Bruce D."/>
            <person name="Doggett N.A."/>
            <person name="Deaven L."/>
            <person name="Schmutz J."/>
            <person name="Grimwood J."/>
            <person name="Richardson P."/>
            <person name="Rokhsar D.S."/>
            <person name="Eichler E.E."/>
            <person name="Gilna P."/>
            <person name="Lucas S.M."/>
            <person name="Myers R.M."/>
            <person name="Rubin E.M."/>
            <person name="Pennacchio L.A."/>
        </authorList>
    </citation>
    <scope>NUCLEOTIDE SEQUENCE [LARGE SCALE GENOMIC DNA]</scope>
</reference>
<reference key="6">
    <citation type="submission" date="2005-09" db="EMBL/GenBank/DDBJ databases">
        <authorList>
            <person name="Mural R.J."/>
            <person name="Istrail S."/>
            <person name="Sutton G.G."/>
            <person name="Florea L."/>
            <person name="Halpern A.L."/>
            <person name="Mobarry C.M."/>
            <person name="Lippert R."/>
            <person name="Walenz B."/>
            <person name="Shatkay H."/>
            <person name="Dew I."/>
            <person name="Miller J.R."/>
            <person name="Flanigan M.J."/>
            <person name="Edwards N.J."/>
            <person name="Bolanos R."/>
            <person name="Fasulo D."/>
            <person name="Halldorsson B.V."/>
            <person name="Hannenhalli S."/>
            <person name="Turner R."/>
            <person name="Yooseph S."/>
            <person name="Lu F."/>
            <person name="Nusskern D.R."/>
            <person name="Shue B.C."/>
            <person name="Zheng X.H."/>
            <person name="Zhong F."/>
            <person name="Delcher A.L."/>
            <person name="Huson D.H."/>
            <person name="Kravitz S.A."/>
            <person name="Mouchard L."/>
            <person name="Reinert K."/>
            <person name="Remington K.A."/>
            <person name="Clark A.G."/>
            <person name="Waterman M.S."/>
            <person name="Eichler E.E."/>
            <person name="Adams M.D."/>
            <person name="Hunkapiller M.W."/>
            <person name="Myers E.W."/>
            <person name="Venter J.C."/>
        </authorList>
    </citation>
    <scope>NUCLEOTIDE SEQUENCE [LARGE SCALE GENOMIC DNA]</scope>
</reference>
<reference key="7">
    <citation type="journal article" date="2007" name="BMC Genomics">
        <title>The full-ORF clone resource of the German cDNA consortium.</title>
        <authorList>
            <person name="Bechtel S."/>
            <person name="Rosenfelder H."/>
            <person name="Duda A."/>
            <person name="Schmidt C.P."/>
            <person name="Ernst U."/>
            <person name="Wellenreuther R."/>
            <person name="Mehrle A."/>
            <person name="Schuster C."/>
            <person name="Bahr A."/>
            <person name="Bloecker H."/>
            <person name="Heubner D."/>
            <person name="Hoerlein A."/>
            <person name="Michel G."/>
            <person name="Wedler H."/>
            <person name="Koehrer K."/>
            <person name="Ottenwaelder B."/>
            <person name="Poustka A."/>
            <person name="Wiemann S."/>
            <person name="Schupp I."/>
        </authorList>
    </citation>
    <scope>NUCLEOTIDE SEQUENCE [LARGE SCALE MRNA] OF 403-499 (ISOFORM 1)</scope>
    <source>
        <tissue>Brain</tissue>
    </source>
</reference>
<reference key="8">
    <citation type="journal article" date="1998" name="Genes Dev.">
        <title>The essential mitotic peptidyl-prolyl isomerase Pin1 binds and regulates mitosis-specific phosphoproteins.</title>
        <authorList>
            <person name="Shen M."/>
            <person name="Stukenberg P.T."/>
            <person name="Kirschner M.W."/>
            <person name="Lu K.P."/>
        </authorList>
    </citation>
    <scope>INTERACTION WITH PIN1</scope>
</reference>
<reference key="9">
    <citation type="journal article" date="1999" name="J. Cell Sci.">
        <title>The C-terminal domain of the Cdc2 inhibitory kinase Myt1 interacts with Cdc2 complexes and is required for inhibition of G(2)/M progression.</title>
        <authorList>
            <person name="Wells N.J."/>
            <person name="Watanabe N."/>
            <person name="Tokusumi T."/>
            <person name="Jiang W."/>
            <person name="Verdecia M.A."/>
            <person name="Hunter T."/>
        </authorList>
    </citation>
    <scope>FUNCTION</scope>
    <scope>CATALYTIC ACTIVITY</scope>
    <scope>PHOSPHORYLATION</scope>
    <scope>COMPONENT OF CDC2-CCNB1 COMPLEX</scope>
    <scope>INTERACTION WITH PIN1</scope>
    <scope>MUTAGENESIS OF ASP-251</scope>
</reference>
<reference key="10">
    <citation type="journal article" date="1999" name="Mol. Cell. Biol.">
        <title>Overproduction of human Myt1 kinase induces a G2 cell cycle delay by interfering with the intracellular trafficking of Cdc2-cyclin B1 complexes.</title>
        <authorList>
            <person name="Liu F."/>
            <person name="Rothblum-Oviatt C."/>
            <person name="Ryan C.E."/>
            <person name="Piwnica-Worms H."/>
        </authorList>
    </citation>
    <scope>FUNCTION</scope>
    <scope>CATALYTIC ACTIVITY</scope>
    <scope>MUTAGENESIS OF ASN-238 AND 486-ARG--LEU-488</scope>
</reference>
<reference key="11">
    <citation type="journal article" date="2003" name="J. Biol. Chem.">
        <title>Identification of a consensus motif for Plk (Polo-like kinase) phosphorylation reveals Myt1 as a Plk1 substrate.</title>
        <authorList>
            <person name="Nakajima H."/>
            <person name="Toyoshima-Morimoto F."/>
            <person name="Taniguchi E."/>
            <person name="Nishida E."/>
        </authorList>
    </citation>
    <scope>PHOSPHORYLATION AT SER-426 AND THR-495</scope>
</reference>
<reference key="12">
    <citation type="journal article" date="2008" name="Mol. Cell">
        <title>Kinase-selective enrichment enables quantitative phosphoproteomics of the kinome across the cell cycle.</title>
        <authorList>
            <person name="Daub H."/>
            <person name="Olsen J.V."/>
            <person name="Bairlein M."/>
            <person name="Gnad F."/>
            <person name="Oppermann F.S."/>
            <person name="Korner R."/>
            <person name="Greff Z."/>
            <person name="Keri G."/>
            <person name="Stemmann O."/>
            <person name="Mann M."/>
        </authorList>
    </citation>
    <scope>PHOSPHORYLATION [LARGE SCALE ANALYSIS] AT THR-17; SER-94; SER-469 AND THR-495</scope>
    <scope>IDENTIFICATION BY MASS SPECTROMETRY [LARGE SCALE ANALYSIS]</scope>
    <source>
        <tissue>Cervix carcinoma</tissue>
    </source>
</reference>
<reference key="13">
    <citation type="journal article" date="2008" name="Proc. Natl. Acad. Sci. U.S.A.">
        <title>A quantitative atlas of mitotic phosphorylation.</title>
        <authorList>
            <person name="Dephoure N."/>
            <person name="Zhou C."/>
            <person name="Villen J."/>
            <person name="Beausoleil S.A."/>
            <person name="Bakalarski C.E."/>
            <person name="Elledge S.J."/>
            <person name="Gygi S.P."/>
        </authorList>
    </citation>
    <scope>PHOSPHORYLATION [LARGE SCALE ANALYSIS] AT SER-120; SER-469 AND SER-473</scope>
    <scope>IDENTIFICATION BY MASS SPECTROMETRY [LARGE SCALE ANALYSIS]</scope>
    <source>
        <tissue>Cervix carcinoma</tissue>
    </source>
</reference>
<reference key="14">
    <citation type="journal article" date="2010" name="Sci. Signal.">
        <title>Quantitative phosphoproteomics reveals widespread full phosphorylation site occupancy during mitosis.</title>
        <authorList>
            <person name="Olsen J.V."/>
            <person name="Vermeulen M."/>
            <person name="Santamaria A."/>
            <person name="Kumar C."/>
            <person name="Miller M.L."/>
            <person name="Jensen L.J."/>
            <person name="Gnad F."/>
            <person name="Cox J."/>
            <person name="Jensen T.S."/>
            <person name="Nigg E.A."/>
            <person name="Brunak S."/>
            <person name="Mann M."/>
        </authorList>
    </citation>
    <scope>ACETYLATION [LARGE SCALE ANALYSIS] AT MET-1</scope>
    <scope>PHOSPHORYLATION [LARGE SCALE ANALYSIS] AT THR-17 AND SER-160</scope>
    <scope>IDENTIFICATION BY MASS SPECTROMETRY [LARGE SCALE ANALYSIS]</scope>
    <source>
        <tissue>Cervix carcinoma</tissue>
    </source>
</reference>
<reference key="15">
    <citation type="journal article" date="2013" name="J. Proteome Res.">
        <title>Toward a comprehensive characterization of a human cancer cell phosphoproteome.</title>
        <authorList>
            <person name="Zhou H."/>
            <person name="Di Palma S."/>
            <person name="Preisinger C."/>
            <person name="Peng M."/>
            <person name="Polat A.N."/>
            <person name="Heck A.J."/>
            <person name="Mohammed S."/>
        </authorList>
    </citation>
    <scope>PHOSPHORYLATION [LARGE SCALE ANALYSIS] AT SER-40; SER-94; SER-120; SER-143; SER-469 AND SER-482</scope>
    <scope>IDENTIFICATION BY MASS SPECTROMETRY [LARGE SCALE ANALYSIS]</scope>
    <source>
        <tissue>Erythroleukemia</tissue>
    </source>
</reference>
<reference key="16">
    <citation type="journal article" date="2007" name="Nature">
        <title>Patterns of somatic mutation in human cancer genomes.</title>
        <authorList>
            <person name="Greenman C."/>
            <person name="Stephens P."/>
            <person name="Smith R."/>
            <person name="Dalgliesh G.L."/>
            <person name="Hunter C."/>
            <person name="Bignell G."/>
            <person name="Davies H."/>
            <person name="Teague J."/>
            <person name="Butler A."/>
            <person name="Stevens C."/>
            <person name="Edkins S."/>
            <person name="O'Meara S."/>
            <person name="Vastrik I."/>
            <person name="Schmidt E.E."/>
            <person name="Avis T."/>
            <person name="Barthorpe S."/>
            <person name="Bhamra G."/>
            <person name="Buck G."/>
            <person name="Choudhury B."/>
            <person name="Clements J."/>
            <person name="Cole J."/>
            <person name="Dicks E."/>
            <person name="Forbes S."/>
            <person name="Gray K."/>
            <person name="Halliday K."/>
            <person name="Harrison R."/>
            <person name="Hills K."/>
            <person name="Hinton J."/>
            <person name="Jenkinson A."/>
            <person name="Jones D."/>
            <person name="Menzies A."/>
            <person name="Mironenko T."/>
            <person name="Perry J."/>
            <person name="Raine K."/>
            <person name="Richardson D."/>
            <person name="Shepherd R."/>
            <person name="Small A."/>
            <person name="Tofts C."/>
            <person name="Varian J."/>
            <person name="Webb T."/>
            <person name="West S."/>
            <person name="Widaa S."/>
            <person name="Yates A."/>
            <person name="Cahill D.P."/>
            <person name="Louis D.N."/>
            <person name="Goldstraw P."/>
            <person name="Nicholson A.G."/>
            <person name="Brasseur F."/>
            <person name="Looijenga L."/>
            <person name="Weber B.L."/>
            <person name="Chiew Y.-E."/>
            <person name="DeFazio A."/>
            <person name="Greaves M.F."/>
            <person name="Green A.R."/>
            <person name="Campbell P."/>
            <person name="Birney E."/>
            <person name="Easton D.F."/>
            <person name="Chenevix-Trench G."/>
            <person name="Tan M.-H."/>
            <person name="Khoo S.K."/>
            <person name="Teh B.T."/>
            <person name="Yuen S.T."/>
            <person name="Leung S.Y."/>
            <person name="Wooster R."/>
            <person name="Futreal P.A."/>
            <person name="Stratton M.R."/>
        </authorList>
    </citation>
    <scope>VARIANTS [LARGE SCALE ANALYSIS] GLN-103; CYS-140; HIS-246 AND LYS-351</scope>
</reference>
<evidence type="ECO:0000250" key="1">
    <source>
        <dbReference type="UniProtKB" id="P30291"/>
    </source>
</evidence>
<evidence type="ECO:0000255" key="2">
    <source>
        <dbReference type="PROSITE-ProRule" id="PRU00159"/>
    </source>
</evidence>
<evidence type="ECO:0000255" key="3">
    <source>
        <dbReference type="PROSITE-ProRule" id="PRU10027"/>
    </source>
</evidence>
<evidence type="ECO:0000256" key="4">
    <source>
        <dbReference type="SAM" id="MobiDB-lite"/>
    </source>
</evidence>
<evidence type="ECO:0000269" key="5">
    <source>
    </source>
</evidence>
<evidence type="ECO:0000269" key="6">
    <source>
    </source>
</evidence>
<evidence type="ECO:0000269" key="7">
    <source>
    </source>
</evidence>
<evidence type="ECO:0000269" key="8">
    <source>
    </source>
</evidence>
<evidence type="ECO:0000269" key="9">
    <source>
    </source>
</evidence>
<evidence type="ECO:0000269" key="10">
    <source>
    </source>
</evidence>
<evidence type="ECO:0000269" key="11">
    <source>
    </source>
</evidence>
<evidence type="ECO:0000269" key="12">
    <source ref="4"/>
</evidence>
<evidence type="ECO:0000303" key="13">
    <source>
    </source>
</evidence>
<evidence type="ECO:0000305" key="14"/>
<evidence type="ECO:0007744" key="15">
    <source>
    </source>
</evidence>
<evidence type="ECO:0007744" key="16">
    <source>
    </source>
</evidence>
<evidence type="ECO:0007744" key="17">
    <source>
    </source>
</evidence>
<evidence type="ECO:0007744" key="18">
    <source>
    </source>
</evidence>
<evidence type="ECO:0007829" key="19">
    <source>
        <dbReference type="PDB" id="5VCZ"/>
    </source>
</evidence>
<evidence type="ECO:0007829" key="20">
    <source>
        <dbReference type="PDB" id="5VD1"/>
    </source>
</evidence>
<evidence type="ECO:0007829" key="21">
    <source>
        <dbReference type="PDB" id="8WJY"/>
    </source>
</evidence>
<gene>
    <name type="primary">PKMYT1</name>
    <name type="synonym">MYT1</name>
</gene>
<comment type="function">
    <text evidence="5 6 9 10">Acts as a negative regulator of entry into mitosis (G2 to M transition) by phosphorylation of the CDK1 kinase specifically when CDK1 is complexed to cyclins (PubMed:10373560, PubMed:10504341, PubMed:9001210, PubMed:9268380). Mediates phosphorylation of CDK1 predominantly on 'Thr-14'. Also involved in Golgi fragmentation (PubMed:9001210, PubMed:9268380). May be involved in phosphorylation of CDK1 on 'Tyr-15' to a lesser degree, however tyrosine kinase activity is unclear and may be indirect (PubMed:9001210, PubMed:9268380).</text>
</comment>
<comment type="catalytic activity">
    <reaction evidence="14">
        <text>L-seryl-[protein] + ATP = O-phospho-L-seryl-[protein] + ADP + H(+)</text>
        <dbReference type="Rhea" id="RHEA:17989"/>
        <dbReference type="Rhea" id="RHEA-COMP:9863"/>
        <dbReference type="Rhea" id="RHEA-COMP:11604"/>
        <dbReference type="ChEBI" id="CHEBI:15378"/>
        <dbReference type="ChEBI" id="CHEBI:29999"/>
        <dbReference type="ChEBI" id="CHEBI:30616"/>
        <dbReference type="ChEBI" id="CHEBI:83421"/>
        <dbReference type="ChEBI" id="CHEBI:456216"/>
        <dbReference type="EC" id="2.7.11.1"/>
    </reaction>
</comment>
<comment type="catalytic activity">
    <reaction evidence="5 6 9">
        <text>L-threonyl-[protein] + ATP = O-phospho-L-threonyl-[protein] + ADP + H(+)</text>
        <dbReference type="Rhea" id="RHEA:46608"/>
        <dbReference type="Rhea" id="RHEA-COMP:11060"/>
        <dbReference type="Rhea" id="RHEA-COMP:11605"/>
        <dbReference type="ChEBI" id="CHEBI:15378"/>
        <dbReference type="ChEBI" id="CHEBI:30013"/>
        <dbReference type="ChEBI" id="CHEBI:30616"/>
        <dbReference type="ChEBI" id="CHEBI:61977"/>
        <dbReference type="ChEBI" id="CHEBI:456216"/>
        <dbReference type="EC" id="2.7.11.1"/>
    </reaction>
</comment>
<comment type="activity regulation">
    <text evidence="10">Negatively regulated by hyperphosphorylation during mitosis (PubMed:9268380). The hyperphosphorylated form does not associate with CCNB1-CDC2 complexes (PubMed:9268380). The PLK1 protein kinase may be required for mitotic phosphorylation (PubMed:9268380).</text>
</comment>
<comment type="subunit">
    <text evidence="6 11">Interacts with CDC2-CCNB1 complex. Can also interact with PIN1 when phosphorylated by CDC2-CCNB1.</text>
</comment>
<comment type="interaction">
    <interactant intactId="EBI-495308">
        <id>Q99640</id>
    </interactant>
    <interactant intactId="EBI-495332">
        <id>P14635</id>
        <label>CCNB1</label>
    </interactant>
    <organismsDiffer>false</organismsDiffer>
    <experiments>8</experiments>
</comment>
<comment type="interaction">
    <interactant intactId="EBI-495308">
        <id>Q99640</id>
    </interactant>
    <interactant intactId="EBI-444308">
        <id>P06493</id>
        <label>CDK1</label>
    </interactant>
    <organismsDiffer>false</organismsDiffer>
    <experiments>9</experiments>
</comment>
<comment type="interaction">
    <interactant intactId="EBI-12257782">
        <id>Q99640-2</id>
    </interactant>
    <interactant intactId="EBI-348517">
        <id>O95870</id>
        <label>ABHD16A</label>
    </interactant>
    <organismsDiffer>false</organismsDiffer>
    <experiments>3</experiments>
</comment>
<comment type="interaction">
    <interactant intactId="EBI-12257782">
        <id>Q99640-2</id>
    </interactant>
    <interactant intactId="EBI-1211297">
        <id>P07766</id>
        <label>CD3E</label>
    </interactant>
    <organismsDiffer>false</organismsDiffer>
    <experiments>3</experiments>
</comment>
<comment type="interaction">
    <interactant intactId="EBI-12257782">
        <id>Q99640-2</id>
    </interactant>
    <interactant intactId="EBI-7797864">
        <id>P11912</id>
        <label>CD79A</label>
    </interactant>
    <organismsDiffer>false</organismsDiffer>
    <experiments>3</experiments>
</comment>
<comment type="interaction">
    <interactant intactId="EBI-12257782">
        <id>Q99640-2</id>
    </interactant>
    <interactant intactId="EBI-10215641">
        <id>P56748</id>
        <label>CLDN8</label>
    </interactant>
    <organismsDiffer>false</organismsDiffer>
    <experiments>3</experiments>
</comment>
<comment type="interaction">
    <interactant intactId="EBI-12257782">
        <id>Q99640-2</id>
    </interactant>
    <interactant intactId="EBI-18535450">
        <id>Q9GZR5</id>
        <label>ELOVL4</label>
    </interactant>
    <organismsDiffer>false</organismsDiffer>
    <experiments>3</experiments>
</comment>
<comment type="interaction">
    <interactant intactId="EBI-12257782">
        <id>Q99640-2</id>
    </interactant>
    <interactant intactId="EBI-743099">
        <id>Q969F0</id>
        <label>FATE1</label>
    </interactant>
    <organismsDiffer>false</organismsDiffer>
    <experiments>3</experiments>
</comment>
<comment type="interaction">
    <interactant intactId="EBI-12257782">
        <id>Q99640-2</id>
    </interactant>
    <interactant intactId="EBI-2830566">
        <id>Q9H400</id>
        <label>LIME1</label>
    </interactant>
    <organismsDiffer>false</organismsDiffer>
    <experiments>3</experiments>
</comment>
<comment type="interaction">
    <interactant intactId="EBI-12257782">
        <id>Q99640-2</id>
    </interactant>
    <interactant intactId="EBI-11304917">
        <id>Q8N386</id>
        <label>LRRC25</label>
    </interactant>
    <organismsDiffer>false</organismsDiffer>
    <experiments>3</experiments>
</comment>
<comment type="interaction">
    <interactant intactId="EBI-12257782">
        <id>Q99640-2</id>
    </interactant>
    <interactant intactId="EBI-373355">
        <id>Q5SR56</id>
        <label>MFSD14B</label>
    </interactant>
    <organismsDiffer>false</organismsDiffer>
    <experiments>3</experiments>
</comment>
<comment type="interaction">
    <interactant intactId="EBI-12257782">
        <id>Q99640-2</id>
    </interactant>
    <interactant intactId="EBI-3920969">
        <id>Q6N075</id>
        <label>MFSD5</label>
    </interactant>
    <organismsDiffer>false</organismsDiffer>
    <experiments>3</experiments>
</comment>
<comment type="interaction">
    <interactant intactId="EBI-12257782">
        <id>Q99640-2</id>
    </interactant>
    <interactant intactId="EBI-10192441">
        <id>Q86VR2</id>
        <label>RETREG3</label>
    </interactant>
    <organismsDiffer>false</organismsDiffer>
    <experiments>3</experiments>
</comment>
<comment type="interaction">
    <interactant intactId="EBI-12257782">
        <id>Q99640-2</id>
    </interactant>
    <interactant intactId="EBI-3923031">
        <id>Q14973</id>
        <label>SLC10A1</label>
    </interactant>
    <organismsDiffer>false</organismsDiffer>
    <experiments>3</experiments>
</comment>
<comment type="interaction">
    <interactant intactId="EBI-12257782">
        <id>Q99640-2</id>
    </interactant>
    <interactant intactId="EBI-10262251">
        <id>Q8IWU4</id>
        <label>SLC30A8</label>
    </interactant>
    <organismsDiffer>false</organismsDiffer>
    <experiments>3</experiments>
</comment>
<comment type="interaction">
    <interactant intactId="EBI-12257782">
        <id>Q99640-2</id>
    </interactant>
    <interactant intactId="EBI-3922699">
        <id>Q96IK0</id>
        <label>TMEM101</label>
    </interactant>
    <organismsDiffer>false</organismsDiffer>
    <experiments>3</experiments>
</comment>
<comment type="interaction">
    <interactant intactId="EBI-12257782">
        <id>Q99640-2</id>
    </interactant>
    <interactant intactId="EBI-12195227">
        <id>Q8NBD8</id>
        <label>TMEM229B</label>
    </interactant>
    <organismsDiffer>false</organismsDiffer>
    <experiments>3</experiments>
</comment>
<comment type="interaction">
    <interactant intactId="EBI-12257782">
        <id>Q99640-2</id>
    </interactant>
    <interactant intactId="EBI-6447886">
        <id>Q9Y320</id>
        <label>TMX2</label>
    </interactant>
    <organismsDiffer>false</organismsDiffer>
    <experiments>3</experiments>
</comment>
<comment type="subcellular location">
    <subcellularLocation>
        <location evidence="9">Endoplasmic reticulum membrane</location>
        <topology evidence="9">Peripheral membrane protein</topology>
    </subcellularLocation>
    <subcellularLocation>
        <location evidence="9">Golgi apparatus membrane</location>
        <topology evidence="9">Peripheral membrane protein</topology>
    </subcellularLocation>
</comment>
<comment type="alternative products">
    <event type="alternative splicing"/>
    <isoform>
        <id>Q99640-1</id>
        <name>1</name>
        <sequence type="displayed"/>
    </isoform>
    <isoform>
        <id>Q99640-2</id>
        <name>2</name>
        <sequence type="described" ref="VSP_045699"/>
    </isoform>
    <isoform>
        <id>Q99640-3</id>
        <name>3</name>
        <sequence type="described" ref="VSP_046846"/>
    </isoform>
    <isoform>
        <id>Q99640-4</id>
        <name>4</name>
        <sequence type="described" ref="VSP_046847"/>
    </isoform>
</comment>
<comment type="domain">
    <text evidence="6">The membrane-association motif is essential for the localization to membrane of Golgi stack (PubMed:10504341). According to some authors, it is a transmembrane domain; the existence of a transmembrane region is however unproven (PubMed:10504341).</text>
</comment>
<comment type="PTM">
    <text evidence="6 7">Autophosphorylated. Phosphorylated by CDC2-CCNB1 complexes on undefined serine and threonine residues. The phosphorylation by CDC2-CCNB1 complexes may inhibit the catalytic activity.</text>
</comment>
<comment type="similarity">
    <text evidence="2">Belongs to the protein kinase superfamily. Ser/Thr protein kinase family. WEE1 subfamily.</text>
</comment>
<comment type="sequence caution" evidence="14">
    <conflict type="miscellaneous discrepancy">
        <sequence resource="EMBL-CDS" id="CAD28540"/>
    </conflict>
    <text>Chimeric cDNA.</text>
</comment>
<name>PMYT1_HUMAN</name>
<feature type="chain" id="PRO_0000086573" description="Membrane-associated tyrosine- and threonine-specific cdc2-inhibitory kinase">
    <location>
        <begin position="1"/>
        <end position="499"/>
    </location>
</feature>
<feature type="domain" description="Protein kinase" evidence="2">
    <location>
        <begin position="110"/>
        <end position="359"/>
    </location>
</feature>
<feature type="region of interest" description="Disordered" evidence="4">
    <location>
        <begin position="1"/>
        <end position="29"/>
    </location>
</feature>
<feature type="region of interest" description="Disordered" evidence="4">
    <location>
        <begin position="42"/>
        <end position="72"/>
    </location>
</feature>
<feature type="region of interest" description="Interaction with PIN1" evidence="6">
    <location>
        <begin position="398"/>
        <end position="499"/>
    </location>
</feature>
<feature type="region of interest" description="Interaction with CDC2-CCNB1" evidence="6">
    <location>
        <begin position="437"/>
        <end position="499"/>
    </location>
</feature>
<feature type="region of interest" description="Disordered" evidence="4">
    <location>
        <begin position="451"/>
        <end position="485"/>
    </location>
</feature>
<feature type="short sequence motif" description="Membrane-association motif" evidence="6">
    <location>
        <begin position="382"/>
        <end position="398"/>
    </location>
</feature>
<feature type="compositionally biased region" description="Pro residues" evidence="4">
    <location>
        <begin position="16"/>
        <end position="28"/>
    </location>
</feature>
<feature type="active site" description="Proton acceptor" evidence="2 3">
    <location>
        <position position="233"/>
    </location>
</feature>
<feature type="binding site" evidence="2">
    <location>
        <begin position="116"/>
        <end position="124"/>
    </location>
    <ligand>
        <name>ATP</name>
        <dbReference type="ChEBI" id="CHEBI:30616"/>
    </ligand>
</feature>
<feature type="binding site" evidence="2">
    <location>
        <position position="139"/>
    </location>
    <ligand>
        <name>ATP</name>
        <dbReference type="ChEBI" id="CHEBI:30616"/>
    </ligand>
</feature>
<feature type="binding site" evidence="1">
    <location>
        <position position="238"/>
    </location>
    <ligand>
        <name>Mg(2+)</name>
        <dbReference type="ChEBI" id="CHEBI:18420"/>
        <label>1</label>
    </ligand>
</feature>
<feature type="binding site" evidence="1">
    <location>
        <position position="251"/>
    </location>
    <ligand>
        <name>Mg(2+)</name>
        <dbReference type="ChEBI" id="CHEBI:18420"/>
        <label>1</label>
    </ligand>
</feature>
<feature type="binding site" evidence="1">
    <location>
        <position position="253"/>
    </location>
    <ligand>
        <name>Mg(2+)</name>
        <dbReference type="ChEBI" id="CHEBI:18420"/>
        <label>2</label>
    </ligand>
</feature>
<feature type="modified residue" description="N-acetylmethionine" evidence="17">
    <location>
        <position position="1"/>
    </location>
</feature>
<feature type="modified residue" description="Phosphothreonine" evidence="16 17">
    <location>
        <position position="17"/>
    </location>
</feature>
<feature type="modified residue" description="Phosphoserine" evidence="18">
    <location>
        <position position="40"/>
    </location>
</feature>
<feature type="modified residue" description="Phosphoserine" evidence="16 18">
    <location>
        <position position="94"/>
    </location>
</feature>
<feature type="modified residue" description="Phosphoserine" evidence="15 18">
    <location>
        <position position="120"/>
    </location>
</feature>
<feature type="modified residue" description="Phosphoserine" evidence="18">
    <location>
        <position position="143"/>
    </location>
</feature>
<feature type="modified residue" description="Phosphoserine" evidence="17">
    <location>
        <position position="160"/>
    </location>
</feature>
<feature type="modified residue" description="Phosphoserine; by PLK1" evidence="7">
    <location>
        <position position="426"/>
    </location>
</feature>
<feature type="modified residue" description="Phosphoserine" evidence="15 16 18">
    <location>
        <position position="469"/>
    </location>
</feature>
<feature type="modified residue" description="Phosphoserine" evidence="15">
    <location>
        <position position="473"/>
    </location>
</feature>
<feature type="modified residue" description="Phosphoserine" evidence="18">
    <location>
        <position position="482"/>
    </location>
</feature>
<feature type="modified residue" description="Phosphothreonine; by PLK1" evidence="7 16">
    <location>
        <position position="495"/>
    </location>
</feature>
<feature type="splice variant" id="VSP_046846" description="In isoform 3." evidence="13">
    <location>
        <begin position="1"/>
        <end position="9"/>
    </location>
</feature>
<feature type="splice variant" id="VSP_046847" description="In isoform 4." evidence="13">
    <location>
        <begin position="5"/>
        <end position="73"/>
    </location>
</feature>
<feature type="splice variant" id="VSP_045699" description="In isoform 2." evidence="13">
    <original>SLSPEAVLARTVGSTSTPRSRCTPRDALDLSDINSEPPRGSFPSFEPRNLLSLFEDTLDPT</original>
    <variation>GHPPCLACPPAGLHSPLRLSWPGLWGAPPPPGAGAHPGMPWT</variation>
    <location>
        <begin position="439"/>
        <end position="499"/>
    </location>
</feature>
<feature type="sequence variant" id="VAR_041034" description="In dbSNP:rs55834293." evidence="8">
    <original>E</original>
    <variation>Q</variation>
    <location>
        <position position="103"/>
    </location>
</feature>
<feature type="sequence variant" id="VAR_019928" description="In dbSNP:rs4149796." evidence="8 12">
    <original>R</original>
    <variation>C</variation>
    <location>
        <position position="140"/>
    </location>
</feature>
<feature type="sequence variant" id="VAR_041035" description="In dbSNP:rs35192104." evidence="8">
    <original>R</original>
    <variation>H</variation>
    <location>
        <position position="246"/>
    </location>
</feature>
<feature type="sequence variant" id="VAR_041036" description="In dbSNP:rs56382954." evidence="8">
    <original>E</original>
    <variation>K</variation>
    <location>
        <position position="351"/>
    </location>
</feature>
<feature type="sequence variant" id="VAR_019929" description="In dbSNP:rs4149800." evidence="12">
    <original>P</original>
    <variation>R</variation>
    <location>
        <position position="417"/>
    </location>
</feature>
<feature type="sequence variant" id="VAR_019930" description="In dbSNP:rs10546." evidence="12">
    <original>V</original>
    <variation>A</variation>
    <location>
        <position position="445"/>
    </location>
</feature>
<feature type="mutagenesis site" description="Loss of kinase activity." evidence="5">
    <original>N</original>
    <variation>A</variation>
    <location>
        <position position="238"/>
    </location>
</feature>
<feature type="mutagenesis site" description="Loss of kinase activity." evidence="6">
    <original>D</original>
    <variation>A</variation>
    <location>
        <position position="251"/>
    </location>
</feature>
<feature type="mutagenesis site" description="Loss of CDC2-CCNB1 interaction." evidence="5">
    <original>RNL</original>
    <variation>AAA</variation>
    <location>
        <begin position="486"/>
        <end position="488"/>
    </location>
</feature>
<feature type="sequence conflict" description="In Ref. 4; BAG53500." evidence="14" ref="4">
    <original>E</original>
    <variation>A</variation>
    <location>
        <position position="131"/>
    </location>
</feature>
<feature type="sequence conflict" description="In Ref. 1; AAB71843." evidence="14" ref="1">
    <original>G</original>
    <variation>D</variation>
    <location>
        <position position="415"/>
    </location>
</feature>
<feature type="sequence conflict" description="In Ref. 1; AAB71843." evidence="14" ref="1">
    <original>L</original>
    <variation>F</variation>
    <location>
        <position position="427"/>
    </location>
</feature>
<feature type="sequence conflict" description="In Ref. 1; AAB71843." evidence="14" ref="1">
    <original>L</original>
    <variation>M</variation>
    <location>
        <position position="491"/>
    </location>
</feature>
<feature type="strand" evidence="20">
    <location>
        <begin position="84"/>
        <end position="87"/>
    </location>
</feature>
<feature type="strand" evidence="19">
    <location>
        <begin position="101"/>
        <end position="103"/>
    </location>
</feature>
<feature type="helix" evidence="19">
    <location>
        <begin position="105"/>
        <end position="109"/>
    </location>
</feature>
<feature type="strand" evidence="19">
    <location>
        <begin position="110"/>
        <end position="119"/>
    </location>
</feature>
<feature type="strand" evidence="19">
    <location>
        <begin position="122"/>
        <end position="129"/>
    </location>
</feature>
<feature type="turn" evidence="19">
    <location>
        <begin position="130"/>
        <end position="132"/>
    </location>
</feature>
<feature type="strand" evidence="19">
    <location>
        <begin position="135"/>
        <end position="144"/>
    </location>
</feature>
<feature type="helix" evidence="19">
    <location>
        <begin position="148"/>
        <end position="164"/>
    </location>
</feature>
<feature type="strand" evidence="19">
    <location>
        <begin position="173"/>
        <end position="179"/>
    </location>
</feature>
<feature type="strand" evidence="19">
    <location>
        <begin position="182"/>
        <end position="188"/>
    </location>
</feature>
<feature type="helix" evidence="19">
    <location>
        <begin position="194"/>
        <end position="201"/>
    </location>
</feature>
<feature type="helix" evidence="19">
    <location>
        <begin position="207"/>
        <end position="226"/>
    </location>
</feature>
<feature type="helix" evidence="19">
    <location>
        <begin position="236"/>
        <end position="238"/>
    </location>
</feature>
<feature type="strand" evidence="19">
    <location>
        <begin position="239"/>
        <end position="241"/>
    </location>
</feature>
<feature type="helix" evidence="19">
    <location>
        <begin position="243"/>
        <end position="245"/>
    </location>
</feature>
<feature type="strand" evidence="19">
    <location>
        <begin position="247"/>
        <end position="249"/>
    </location>
</feature>
<feature type="helix" evidence="21">
    <location>
        <begin position="252"/>
        <end position="254"/>
    </location>
</feature>
<feature type="strand" evidence="19">
    <location>
        <begin position="256"/>
        <end position="259"/>
    </location>
</feature>
<feature type="strand" evidence="19">
    <location>
        <begin position="261"/>
        <end position="263"/>
    </location>
</feature>
<feature type="turn" evidence="19">
    <location>
        <begin position="271"/>
        <end position="273"/>
    </location>
</feature>
<feature type="helix" evidence="19">
    <location>
        <begin position="276"/>
        <end position="280"/>
    </location>
</feature>
<feature type="helix" evidence="19">
    <location>
        <begin position="286"/>
        <end position="301"/>
    </location>
</feature>
<feature type="helix" evidence="19">
    <location>
        <begin position="309"/>
        <end position="315"/>
    </location>
</feature>
<feature type="turn" evidence="19">
    <location>
        <begin position="316"/>
        <end position="318"/>
    </location>
</feature>
<feature type="helix" evidence="19">
    <location>
        <begin position="322"/>
        <end position="325"/>
    </location>
</feature>
<feature type="helix" evidence="19">
    <location>
        <begin position="330"/>
        <end position="339"/>
    </location>
</feature>
<feature type="turn" evidence="19">
    <location>
        <begin position="344"/>
        <end position="346"/>
    </location>
</feature>
<feature type="helix" evidence="19">
    <location>
        <begin position="350"/>
        <end position="354"/>
    </location>
</feature>
<feature type="helix" evidence="19">
    <location>
        <begin position="357"/>
        <end position="359"/>
    </location>
</feature>
<organism>
    <name type="scientific">Homo sapiens</name>
    <name type="common">Human</name>
    <dbReference type="NCBI Taxonomy" id="9606"/>
    <lineage>
        <taxon>Eukaryota</taxon>
        <taxon>Metazoa</taxon>
        <taxon>Chordata</taxon>
        <taxon>Craniata</taxon>
        <taxon>Vertebrata</taxon>
        <taxon>Euteleostomi</taxon>
        <taxon>Mammalia</taxon>
        <taxon>Eutheria</taxon>
        <taxon>Euarchontoglires</taxon>
        <taxon>Primates</taxon>
        <taxon>Haplorrhini</taxon>
        <taxon>Catarrhini</taxon>
        <taxon>Hominidae</taxon>
        <taxon>Homo</taxon>
    </lineage>
</organism>
<accession>Q99640</accession>
<accession>B3KUN8</accession>
<accession>B4DXD4</accession>
<accession>D3DUA4</accession>
<accession>F8W164</accession>
<accession>I3L1V2</accession>
<accession>O14731</accession>
<accession>Q7LE24</accession>
<accession>Q8TCM9</accession>